<dbReference type="EMBL" id="DQ309039">
    <property type="protein sequence ID" value="ABD73923.1"/>
    <property type="molecule type" value="mRNA"/>
</dbReference>
<dbReference type="EMBL" id="DQ309040">
    <property type="protein sequence ID" value="ABD73924.1"/>
    <property type="molecule type" value="mRNA"/>
</dbReference>
<dbReference type="EMBL" id="AC138649">
    <property type="status" value="NOT_ANNOTATED_CDS"/>
    <property type="molecule type" value="Genomic_DNA"/>
</dbReference>
<dbReference type="SMR" id="Q1A5X7"/>
<dbReference type="IntAct" id="Q1A5X7">
    <property type="interactions" value="117"/>
</dbReference>
<dbReference type="iPTMnet" id="Q1A5X7"/>
<dbReference type="PhosphoSitePlus" id="Q1A5X7"/>
<dbReference type="BioMuta" id="HGNC:27892"/>
<dbReference type="jPOST" id="Q1A5X7"/>
<dbReference type="MassIVE" id="Q1A5X7"/>
<dbReference type="PeptideAtlas" id="Q1A5X7"/>
<dbReference type="ProteomicsDB" id="61202">
    <molecule id="Q1A5X7-1"/>
</dbReference>
<dbReference type="AGR" id="HGNC:27892"/>
<dbReference type="GeneCards" id="WHAMMP3"/>
<dbReference type="HGNC" id="HGNC:27892">
    <property type="gene designation" value="WHAMMP3"/>
</dbReference>
<dbReference type="neXtProt" id="NX_Q1A5X7"/>
<dbReference type="InParanoid" id="Q1A5X7"/>
<dbReference type="PAN-GO" id="Q1A5X7">
    <property type="GO annotations" value="5 GO annotations based on evolutionary models"/>
</dbReference>
<dbReference type="PhylomeDB" id="Q1A5X7"/>
<dbReference type="PathwayCommons" id="Q1A5X7"/>
<dbReference type="Pharos" id="Q1A5X7">
    <property type="development level" value="Tdark"/>
</dbReference>
<dbReference type="PRO" id="PR:Q1A5X7"/>
<dbReference type="Proteomes" id="UP000005640">
    <property type="component" value="Unplaced"/>
</dbReference>
<dbReference type="RNAct" id="Q1A5X7">
    <property type="molecule type" value="protein"/>
</dbReference>
<dbReference type="InterPro" id="IPR031738">
    <property type="entry name" value="JMY/WHAMM"/>
</dbReference>
<dbReference type="PANTHER" id="PTHR23330">
    <property type="entry name" value="P300 TRANSCRIPTIONAL COFACTOR JMY-RELATED"/>
    <property type="match status" value="1"/>
</dbReference>
<dbReference type="PANTHER" id="PTHR23330:SF6">
    <property type="entry name" value="WASP HOMOLOG-ASSOCIATED PROTEIN WITH ACTIN, MEMBRANES AND MICROTUBULES"/>
    <property type="match status" value="1"/>
</dbReference>
<dbReference type="Pfam" id="PF15871">
    <property type="entry name" value="JMY"/>
    <property type="match status" value="1"/>
</dbReference>
<sequence length="153" mass="18091">MMILVFWSNYPYEPVCLASHRNNMEASVPKYKKHLPQLGMQKEMEQDVKRFGQAAWATAIPRLEKLKLMLAQETLQLMRAKELCLNHKRAEIQGKMEDLPEQEKNINVVDELAIQFYEIQLELYEVKFEILKNKEILLTTQLDSLERLIKDEI</sequence>
<protein>
    <recommendedName>
        <fullName>Putative WASP homolog-associated protein with actin, membranes and microtubules-like protein 1</fullName>
    </recommendedName>
    <alternativeName>
        <fullName>WAS protein homolog associated with actin, Golgi membranes and microtubules pseudogene 3</fullName>
    </alternativeName>
    <alternativeName>
        <fullName>WAS protein homology region 2 domain-containing protein 1-like protein 1</fullName>
        <shortName>WH2 domain-containing protein 1-like protein 1</shortName>
        <shortName>WHDC1-like protein 1</shortName>
    </alternativeName>
</protein>
<feature type="chain" id="PRO_0000316814" description="Putative WASP homolog-associated protein with actin, membranes and microtubules-like protein 1">
    <location>
        <begin position="1"/>
        <end position="153"/>
    </location>
</feature>
<feature type="coiled-coil region" evidence="1">
    <location>
        <begin position="113"/>
        <end position="151"/>
    </location>
</feature>
<feature type="splice variant" id="VSP_030789" description="In isoform 1." evidence="2">
    <location>
        <begin position="1"/>
        <end position="39"/>
    </location>
</feature>
<feature type="splice variant" id="VSP_030790" description="In isoform 1." evidence="2">
    <original>DEI</original>
    <variation>EKQDEVVYYDPCESPEELSH</variation>
    <location>
        <begin position="151"/>
        <end position="153"/>
    </location>
</feature>
<feature type="sequence conflict" description="In Ref. 1; ABD73923." evidence="3" ref="1">
    <original>L</original>
    <variation>F</variation>
    <location>
        <position position="121"/>
    </location>
</feature>
<reference key="1">
    <citation type="journal article" date="2008" name="BMC Genomics">
        <title>Genomic analysis of the chromosome 15q11-q13 Prader-Willi syndrome region and characterization of transcripts for GOLGA8E and WHCD1L1 from the proximal breakpoint region.</title>
        <authorList>
            <person name="Jiang Y.-H."/>
            <person name="Wauki K."/>
            <person name="Liu Q."/>
            <person name="Bressler J."/>
            <person name="Pan Y."/>
            <person name="Kashork C.D."/>
            <person name="Shaffer L.G."/>
            <person name="Beaudet A.L."/>
        </authorList>
    </citation>
    <scope>NUCLEOTIDE SEQUENCE [MRNA] (ISOFORMS 1 AND 2)</scope>
    <scope>CHROMOSOMAL LOCATION</scope>
</reference>
<reference key="2">
    <citation type="journal article" date="2006" name="Nature">
        <title>Analysis of the DNA sequence and duplication history of human chromosome 15.</title>
        <authorList>
            <person name="Zody M.C."/>
            <person name="Garber M."/>
            <person name="Sharpe T."/>
            <person name="Young S.K."/>
            <person name="Rowen L."/>
            <person name="O'Neill K."/>
            <person name="Whittaker C.A."/>
            <person name="Kamal M."/>
            <person name="Chang J.L."/>
            <person name="Cuomo C.A."/>
            <person name="Dewar K."/>
            <person name="FitzGerald M.G."/>
            <person name="Kodira C.D."/>
            <person name="Madan A."/>
            <person name="Qin S."/>
            <person name="Yang X."/>
            <person name="Abbasi N."/>
            <person name="Abouelleil A."/>
            <person name="Arachchi H.M."/>
            <person name="Baradarani L."/>
            <person name="Birditt B."/>
            <person name="Bloom S."/>
            <person name="Bloom T."/>
            <person name="Borowsky M.L."/>
            <person name="Burke J."/>
            <person name="Butler J."/>
            <person name="Cook A."/>
            <person name="DeArellano K."/>
            <person name="DeCaprio D."/>
            <person name="Dorris L. III"/>
            <person name="Dors M."/>
            <person name="Eichler E.E."/>
            <person name="Engels R."/>
            <person name="Fahey J."/>
            <person name="Fleetwood P."/>
            <person name="Friedman C."/>
            <person name="Gearin G."/>
            <person name="Hall J.L."/>
            <person name="Hensley G."/>
            <person name="Johnson E."/>
            <person name="Jones C."/>
            <person name="Kamat A."/>
            <person name="Kaur A."/>
            <person name="Locke D.P."/>
            <person name="Madan A."/>
            <person name="Munson G."/>
            <person name="Jaffe D.B."/>
            <person name="Lui A."/>
            <person name="Macdonald P."/>
            <person name="Mauceli E."/>
            <person name="Naylor J.W."/>
            <person name="Nesbitt R."/>
            <person name="Nicol R."/>
            <person name="O'Leary S.B."/>
            <person name="Ratcliffe A."/>
            <person name="Rounsley S."/>
            <person name="She X."/>
            <person name="Sneddon K.M.B."/>
            <person name="Stewart S."/>
            <person name="Sougnez C."/>
            <person name="Stone S.M."/>
            <person name="Topham K."/>
            <person name="Vincent D."/>
            <person name="Wang S."/>
            <person name="Zimmer A.R."/>
            <person name="Birren B.W."/>
            <person name="Hood L."/>
            <person name="Lander E.S."/>
            <person name="Nusbaum C."/>
        </authorList>
    </citation>
    <scope>NUCLEOTIDE SEQUENCE [LARGE SCALE GENOMIC DNA]</scope>
</reference>
<name>WHAL1_HUMAN</name>
<evidence type="ECO:0000255" key="1"/>
<evidence type="ECO:0000303" key="2">
    <source>
    </source>
</evidence>
<evidence type="ECO:0000305" key="3"/>
<proteinExistence type="uncertain"/>
<comment type="alternative products">
    <event type="alternative splicing"/>
    <isoform>
        <id>Q1A5X7-1</id>
        <name>2</name>
        <name>II</name>
        <sequence type="displayed"/>
    </isoform>
    <isoform>
        <id>Q1A5X7-2</id>
        <name>1</name>
        <name>I</name>
        <sequence type="described" ref="VSP_030789 VSP_030790"/>
    </isoform>
</comment>
<comment type="caution">
    <text evidence="3">Could be the product of a pseudogene.</text>
</comment>
<gene>
    <name type="primary">WHAMMP3</name>
    <name type="synonym">WHAMML1</name>
    <name type="synonym">WHDC1L1</name>
</gene>
<accession>Q1A5X7</accession>
<accession>Q1A5X8</accession>
<accession>Q52M16</accession>
<accession>Q52M18</accession>
<keyword id="KW-0025">Alternative splicing</keyword>
<keyword id="KW-0175">Coiled coil</keyword>
<keyword id="KW-1185">Reference proteome</keyword>
<organism>
    <name type="scientific">Homo sapiens</name>
    <name type="common">Human</name>
    <dbReference type="NCBI Taxonomy" id="9606"/>
    <lineage>
        <taxon>Eukaryota</taxon>
        <taxon>Metazoa</taxon>
        <taxon>Chordata</taxon>
        <taxon>Craniata</taxon>
        <taxon>Vertebrata</taxon>
        <taxon>Euteleostomi</taxon>
        <taxon>Mammalia</taxon>
        <taxon>Eutheria</taxon>
        <taxon>Euarchontoglires</taxon>
        <taxon>Primates</taxon>
        <taxon>Haplorrhini</taxon>
        <taxon>Catarrhini</taxon>
        <taxon>Hominidae</taxon>
        <taxon>Homo</taxon>
    </lineage>
</organism>